<feature type="initiator methionine" description="Removed" evidence="2">
    <location>
        <position position="1"/>
    </location>
</feature>
<feature type="chain" id="PRO_0000236243" description="Ras-related protein Rab-27A">
    <location>
        <begin position="2"/>
        <end position="221"/>
    </location>
</feature>
<feature type="region of interest" description="Disordered" evidence="4">
    <location>
        <begin position="202"/>
        <end position="221"/>
    </location>
</feature>
<feature type="short sequence motif" description="Effector region" evidence="1">
    <location>
        <begin position="38"/>
        <end position="46"/>
    </location>
</feature>
<feature type="compositionally biased region" description="Basic and acidic residues" evidence="4">
    <location>
        <begin position="211"/>
        <end position="221"/>
    </location>
</feature>
<feature type="binding site" evidence="1">
    <location>
        <begin position="16"/>
        <end position="24"/>
    </location>
    <ligand>
        <name>GTP</name>
        <dbReference type="ChEBI" id="CHEBI:37565"/>
    </ligand>
</feature>
<feature type="binding site" evidence="1">
    <location>
        <begin position="74"/>
        <end position="78"/>
    </location>
    <ligand>
        <name>GTP</name>
        <dbReference type="ChEBI" id="CHEBI:37565"/>
    </ligand>
</feature>
<feature type="binding site" evidence="1">
    <location>
        <begin position="133"/>
        <end position="136"/>
    </location>
    <ligand>
        <name>GTP</name>
        <dbReference type="ChEBI" id="CHEBI:37565"/>
    </ligand>
</feature>
<feature type="binding site" evidence="1">
    <location>
        <begin position="163"/>
        <end position="165"/>
    </location>
    <ligand>
        <name>GTP</name>
        <dbReference type="ChEBI" id="CHEBI:37565"/>
    </ligand>
</feature>
<feature type="modified residue" description="N-acetylserine" evidence="2">
    <location>
        <position position="2"/>
    </location>
</feature>
<feature type="modified residue" description="Phosphoserine" evidence="2">
    <location>
        <position position="2"/>
    </location>
</feature>
<feature type="modified residue" description="Cysteine methyl ester" evidence="1">
    <location>
        <position position="221"/>
    </location>
</feature>
<feature type="lipid moiety-binding region" description="S-geranylgeranyl cysteine" evidence="1">
    <location>
        <position position="219"/>
    </location>
</feature>
<feature type="lipid moiety-binding region" description="S-geranylgeranyl cysteine" evidence="1">
    <location>
        <position position="221"/>
    </location>
</feature>
<feature type="disulfide bond" evidence="1">
    <location>
        <begin position="123"/>
        <end position="188"/>
    </location>
</feature>
<organism>
    <name type="scientific">Sus scrofa</name>
    <name type="common">Pig</name>
    <dbReference type="NCBI Taxonomy" id="9823"/>
    <lineage>
        <taxon>Eukaryota</taxon>
        <taxon>Metazoa</taxon>
        <taxon>Chordata</taxon>
        <taxon>Craniata</taxon>
        <taxon>Vertebrata</taxon>
        <taxon>Euteleostomi</taxon>
        <taxon>Mammalia</taxon>
        <taxon>Eutheria</taxon>
        <taxon>Laurasiatheria</taxon>
        <taxon>Artiodactyla</taxon>
        <taxon>Suina</taxon>
        <taxon>Suidae</taxon>
        <taxon>Sus</taxon>
    </lineage>
</organism>
<gene>
    <name type="primary">RAB27A</name>
</gene>
<comment type="function">
    <text evidence="2">Small GTPase which cycles between active GTP-bound and inactive GDP-bound states. In its active state, binds to a variety of effector proteins to regulate homeostasis of late endocytic pathway, including endosomal positioning, maturation and secretion. Plays a role in cytotoxic granule exocytosis in lymphocytes. Required for both granule maturation and granule docking and priming at the immunologic synapse.</text>
</comment>
<comment type="catalytic activity">
    <reaction evidence="2">
        <text>GTP + H2O = GDP + phosphate + H(+)</text>
        <dbReference type="Rhea" id="RHEA:19669"/>
        <dbReference type="ChEBI" id="CHEBI:15377"/>
        <dbReference type="ChEBI" id="CHEBI:15378"/>
        <dbReference type="ChEBI" id="CHEBI:37565"/>
        <dbReference type="ChEBI" id="CHEBI:43474"/>
        <dbReference type="ChEBI" id="CHEBI:58189"/>
        <dbReference type="EC" id="3.6.5.2"/>
    </reaction>
    <physiologicalReaction direction="left-to-right" evidence="2">
        <dbReference type="Rhea" id="RHEA:19670"/>
    </physiologicalReaction>
</comment>
<comment type="activity regulation">
    <text evidence="2">Regulated by guanine nucleotide exchange factors (GEFs) which promote the exchange of bound GDP for free GTP, GTPase activating proteins (GAPs) which increase the GTP hydrolysis activity, and GDP dissociation inhibitors which inhibit the dissociation of the nucleotide from the GTPase. Activated by GEFs such as DENND10.</text>
</comment>
<comment type="subunit">
    <text evidence="2 3">Binds SYTL1, SLAC2B, MYRIP, SYTL3, SYTL4 and SYTL5. Interacts with RPH3A and RPH3A (By similarity). Binds MLPH and SYTL2. Interacts with UNC13D. Does not interact with the BLOC-3 complex (heterodimer of HPS1 and HPS4) (By similarity). Interacts (GDP-bound form preferentially) with DENND10 (By similarity).</text>
</comment>
<comment type="subcellular location">
    <subcellularLocation>
        <location evidence="2">Membrane</location>
        <topology evidence="2">Lipid-anchor</topology>
    </subcellularLocation>
    <subcellularLocation>
        <location evidence="2">Melanosome</location>
    </subcellularLocation>
    <subcellularLocation>
        <location evidence="2">Late endosome</location>
    </subcellularLocation>
    <subcellularLocation>
        <location evidence="2">Lysosome</location>
    </subcellularLocation>
    <text evidence="2">Identified by mass spectrometry in melanosome fractions from stage I to stage IV. Localizes to endosomal exocytic vesicles.</text>
</comment>
<comment type="similarity">
    <text evidence="5">Belongs to the small GTPase superfamily. Rab family.</text>
</comment>
<name>RB27A_PIG</name>
<protein>
    <recommendedName>
        <fullName>Ras-related protein Rab-27A</fullName>
        <ecNumber evidence="2">3.6.5.2</ecNumber>
    </recommendedName>
</protein>
<reference key="1">
    <citation type="journal article" date="2006" name="Anim. Genet.">
        <title>Sequencing, mapping and nucleotide variation of porcine coat color genes EDNRB, MYO5A, KITLG, SLC45A2, RAB27A, SILV and MITF.</title>
        <authorList>
            <person name="Okumura N."/>
            <person name="Hayashi T."/>
            <person name="Sekikawa H."/>
            <person name="Matsumoto T."/>
            <person name="Mikawa A."/>
            <person name="Hamasima N."/>
            <person name="Awata T."/>
        </authorList>
    </citation>
    <scope>NUCLEOTIDE SEQUENCE [MRNA]</scope>
    <source>
        <tissue>Retina</tissue>
    </source>
</reference>
<evidence type="ECO:0000250" key="1"/>
<evidence type="ECO:0000250" key="2">
    <source>
        <dbReference type="UniProtKB" id="P51159"/>
    </source>
</evidence>
<evidence type="ECO:0000250" key="3">
    <source>
        <dbReference type="UniProtKB" id="Q9ERI2"/>
    </source>
</evidence>
<evidence type="ECO:0000256" key="4">
    <source>
        <dbReference type="SAM" id="MobiDB-lite"/>
    </source>
</evidence>
<evidence type="ECO:0000305" key="5"/>
<dbReference type="EC" id="3.6.5.2" evidence="2"/>
<dbReference type="EMBL" id="AB209958">
    <property type="protein sequence ID" value="BAE03308.1"/>
    <property type="molecule type" value="mRNA"/>
</dbReference>
<dbReference type="RefSeq" id="NP_001027528.1">
    <property type="nucleotide sequence ID" value="NM_001032357.1"/>
</dbReference>
<dbReference type="RefSeq" id="XP_005659637.1">
    <property type="nucleotide sequence ID" value="XM_005659580.3"/>
</dbReference>
<dbReference type="RefSeq" id="XP_005659638.1">
    <property type="nucleotide sequence ID" value="XM_005659581.3"/>
</dbReference>
<dbReference type="RefSeq" id="XP_005659639.1">
    <property type="nucleotide sequence ID" value="XM_005659582.3"/>
</dbReference>
<dbReference type="RefSeq" id="XP_005659640.1">
    <property type="nucleotide sequence ID" value="XM_005659583.3"/>
</dbReference>
<dbReference type="RefSeq" id="XP_005659641.1">
    <property type="nucleotide sequence ID" value="XM_005659584.3"/>
</dbReference>
<dbReference type="RefSeq" id="XP_005659642.1">
    <property type="nucleotide sequence ID" value="XM_005659585.3"/>
</dbReference>
<dbReference type="RefSeq" id="XP_013848417.1">
    <property type="nucleotide sequence ID" value="XM_013992963.2"/>
</dbReference>
<dbReference type="RefSeq" id="XP_013848418.1">
    <property type="nucleotide sequence ID" value="XM_013992964.2"/>
</dbReference>
<dbReference type="RefSeq" id="XP_013848419.1">
    <property type="nucleotide sequence ID" value="XM_013992965.2"/>
</dbReference>
<dbReference type="RefSeq" id="XP_013848420.1">
    <property type="nucleotide sequence ID" value="XM_013992966.2"/>
</dbReference>
<dbReference type="RefSeq" id="XP_013848422.1">
    <property type="nucleotide sequence ID" value="XM_013992968.2"/>
</dbReference>
<dbReference type="RefSeq" id="XP_020939548.1">
    <property type="nucleotide sequence ID" value="XM_021083889.1"/>
</dbReference>
<dbReference type="RefSeq" id="XP_020939572.1">
    <property type="nucleotide sequence ID" value="XM_021083913.1"/>
</dbReference>
<dbReference type="RefSeq" id="XP_020939575.1">
    <property type="nucleotide sequence ID" value="XM_021083916.1"/>
</dbReference>
<dbReference type="RefSeq" id="XP_020939579.1">
    <property type="nucleotide sequence ID" value="XM_021083920.1"/>
</dbReference>
<dbReference type="RefSeq" id="XP_020939588.1">
    <property type="nucleotide sequence ID" value="XM_021083929.1"/>
</dbReference>
<dbReference type="RefSeq" id="XP_020939598.1">
    <property type="nucleotide sequence ID" value="XM_021083939.1"/>
</dbReference>
<dbReference type="RefSeq" id="XP_020939620.1">
    <property type="nucleotide sequence ID" value="XM_021083961.1"/>
</dbReference>
<dbReference type="SMR" id="Q4LE85"/>
<dbReference type="FunCoup" id="Q4LE85">
    <property type="interactions" value="330"/>
</dbReference>
<dbReference type="STRING" id="9823.ENSSSCP00000041641"/>
<dbReference type="PaxDb" id="9823-ENSSSCP00000004969"/>
<dbReference type="PeptideAtlas" id="Q4LE85"/>
<dbReference type="Ensembl" id="ENSSSCT00000038357.3">
    <property type="protein sequence ID" value="ENSSSCP00000041641.1"/>
    <property type="gene ID" value="ENSSSCG00000004612.5"/>
</dbReference>
<dbReference type="Ensembl" id="ENSSSCT00015073554.1">
    <property type="protein sequence ID" value="ENSSSCP00015029547.1"/>
    <property type="gene ID" value="ENSSSCG00015055155.1"/>
</dbReference>
<dbReference type="Ensembl" id="ENSSSCT00025039592.1">
    <property type="protein sequence ID" value="ENSSSCP00025016776.1"/>
    <property type="gene ID" value="ENSSSCG00025029044.1"/>
</dbReference>
<dbReference type="Ensembl" id="ENSSSCT00030030675.1">
    <property type="protein sequence ID" value="ENSSSCP00030013758.1"/>
    <property type="gene ID" value="ENSSSCG00030022112.1"/>
</dbReference>
<dbReference type="Ensembl" id="ENSSSCT00035088356.1">
    <property type="protein sequence ID" value="ENSSSCP00035036921.1"/>
    <property type="gene ID" value="ENSSSCG00035065558.1"/>
</dbReference>
<dbReference type="Ensembl" id="ENSSSCT00040081693.1">
    <property type="protein sequence ID" value="ENSSSCP00040035522.1"/>
    <property type="gene ID" value="ENSSSCG00040060006.1"/>
</dbReference>
<dbReference type="Ensembl" id="ENSSSCT00045060087.1">
    <property type="protein sequence ID" value="ENSSSCP00045042191.1"/>
    <property type="gene ID" value="ENSSSCG00045034965.1"/>
</dbReference>
<dbReference type="Ensembl" id="ENSSSCT00050004561.1">
    <property type="protein sequence ID" value="ENSSSCP00050001816.1"/>
    <property type="gene ID" value="ENSSSCG00050003397.1"/>
</dbReference>
<dbReference type="Ensembl" id="ENSSSCT00055005327.1">
    <property type="protein sequence ID" value="ENSSSCP00055004133.1"/>
    <property type="gene ID" value="ENSSSCG00055002777.1"/>
</dbReference>
<dbReference type="Ensembl" id="ENSSSCT00060041337.1">
    <property type="protein sequence ID" value="ENSSSCP00060017516.1"/>
    <property type="gene ID" value="ENSSSCG00060030599.1"/>
</dbReference>
<dbReference type="Ensembl" id="ENSSSCT00065064555.1">
    <property type="protein sequence ID" value="ENSSSCP00065027969.1"/>
    <property type="gene ID" value="ENSSSCG00065047198.1"/>
</dbReference>
<dbReference type="Ensembl" id="ENSSSCT00070016409.1">
    <property type="protein sequence ID" value="ENSSSCP00070013583.1"/>
    <property type="gene ID" value="ENSSSCG00070008420.1"/>
</dbReference>
<dbReference type="Ensembl" id="ENSSSCT00070016417.1">
    <property type="protein sequence ID" value="ENSSSCP00070013591.1"/>
    <property type="gene ID" value="ENSSSCG00070008420.1"/>
</dbReference>
<dbReference type="Ensembl" id="ENSSSCT00070016422.1">
    <property type="protein sequence ID" value="ENSSSCP00070013596.1"/>
    <property type="gene ID" value="ENSSSCG00070008420.1"/>
</dbReference>
<dbReference type="Ensembl" id="ENSSSCT00070016430.1">
    <property type="protein sequence ID" value="ENSSSCP00070013604.1"/>
    <property type="gene ID" value="ENSSSCG00070008420.1"/>
</dbReference>
<dbReference type="Ensembl" id="ENSSSCT00070016445.1">
    <property type="protein sequence ID" value="ENSSSCP00070013617.1"/>
    <property type="gene ID" value="ENSSSCG00070008420.1"/>
</dbReference>
<dbReference type="Ensembl" id="ENSSSCT00070016453.1">
    <property type="protein sequence ID" value="ENSSSCP00070013625.1"/>
    <property type="gene ID" value="ENSSSCG00070008420.1"/>
</dbReference>
<dbReference type="Ensembl" id="ENSSSCT00105066996">
    <property type="protein sequence ID" value="ENSSSCP00105047636"/>
    <property type="gene ID" value="ENSSSCG00105035129"/>
</dbReference>
<dbReference type="Ensembl" id="ENSSSCT00110006719">
    <property type="protein sequence ID" value="ENSSSCP00110004900"/>
    <property type="gene ID" value="ENSSSCG00110003380"/>
</dbReference>
<dbReference type="Ensembl" id="ENSSSCT00115036226">
    <property type="protein sequence ID" value="ENSSSCP00115034306"/>
    <property type="gene ID" value="ENSSSCG00115020462"/>
</dbReference>
<dbReference type="Ensembl" id="ENSSSCT00130060941">
    <property type="protein sequence ID" value="ENSSSCP00130043731"/>
    <property type="gene ID" value="ENSSSCG00130031162"/>
</dbReference>
<dbReference type="GeneID" id="606749"/>
<dbReference type="KEGG" id="ssc:606749"/>
<dbReference type="CTD" id="5873"/>
<dbReference type="VGNC" id="VGNC:98249">
    <property type="gene designation" value="RAB27A"/>
</dbReference>
<dbReference type="eggNOG" id="KOG0081">
    <property type="taxonomic scope" value="Eukaryota"/>
</dbReference>
<dbReference type="GeneTree" id="ENSGT00940000156218"/>
<dbReference type="HOGENOM" id="CLU_041217_10_1_1"/>
<dbReference type="InParanoid" id="Q4LE85"/>
<dbReference type="OMA" id="MHAYTED"/>
<dbReference type="OrthoDB" id="9989112at2759"/>
<dbReference type="TreeFam" id="TF312895"/>
<dbReference type="Reactome" id="R-SSC-6798695">
    <property type="pathway name" value="Neutrophil degranulation"/>
</dbReference>
<dbReference type="Reactome" id="R-SSC-8876198">
    <property type="pathway name" value="RAB GEFs exchange GTP for GDP on RABs"/>
</dbReference>
<dbReference type="Proteomes" id="UP000008227">
    <property type="component" value="Chromosome 1"/>
</dbReference>
<dbReference type="Proteomes" id="UP000314985">
    <property type="component" value="Chromosome 1"/>
</dbReference>
<dbReference type="Proteomes" id="UP000694570">
    <property type="component" value="Unplaced"/>
</dbReference>
<dbReference type="Proteomes" id="UP000694571">
    <property type="component" value="Unplaced"/>
</dbReference>
<dbReference type="Proteomes" id="UP000694720">
    <property type="component" value="Unplaced"/>
</dbReference>
<dbReference type="Proteomes" id="UP000694722">
    <property type="component" value="Unplaced"/>
</dbReference>
<dbReference type="Proteomes" id="UP000694723">
    <property type="component" value="Unplaced"/>
</dbReference>
<dbReference type="Proteomes" id="UP000694724">
    <property type="component" value="Unplaced"/>
</dbReference>
<dbReference type="Proteomes" id="UP000694725">
    <property type="component" value="Unplaced"/>
</dbReference>
<dbReference type="Proteomes" id="UP000694726">
    <property type="component" value="Unplaced"/>
</dbReference>
<dbReference type="Proteomes" id="UP000694727">
    <property type="component" value="Unplaced"/>
</dbReference>
<dbReference type="Proteomes" id="UP000694728">
    <property type="component" value="Unplaced"/>
</dbReference>
<dbReference type="Bgee" id="ENSSSCG00000004612">
    <property type="expression patterns" value="Expressed in pituitary gland and 41 other cell types or tissues"/>
</dbReference>
<dbReference type="ExpressionAtlas" id="Q4LE85">
    <property type="expression patterns" value="baseline and differential"/>
</dbReference>
<dbReference type="GO" id="GO:0016324">
    <property type="term" value="C:apical plasma membrane"/>
    <property type="evidence" value="ECO:0000318"/>
    <property type="project" value="GO_Central"/>
</dbReference>
<dbReference type="GO" id="GO:0030425">
    <property type="term" value="C:dendrite"/>
    <property type="evidence" value="ECO:0007669"/>
    <property type="project" value="Ensembl"/>
</dbReference>
<dbReference type="GO" id="GO:0070382">
    <property type="term" value="C:exocytic vesicle"/>
    <property type="evidence" value="ECO:0000318"/>
    <property type="project" value="GO_Central"/>
</dbReference>
<dbReference type="GO" id="GO:0005794">
    <property type="term" value="C:Golgi apparatus"/>
    <property type="evidence" value="ECO:0000318"/>
    <property type="project" value="GO_Central"/>
</dbReference>
<dbReference type="GO" id="GO:0005770">
    <property type="term" value="C:late endosome"/>
    <property type="evidence" value="ECO:0000250"/>
    <property type="project" value="UniProtKB"/>
</dbReference>
<dbReference type="GO" id="GO:0005764">
    <property type="term" value="C:lysosome"/>
    <property type="evidence" value="ECO:0007669"/>
    <property type="project" value="UniProtKB-SubCell"/>
</dbReference>
<dbReference type="GO" id="GO:0042470">
    <property type="term" value="C:melanosome"/>
    <property type="evidence" value="ECO:0000318"/>
    <property type="project" value="GO_Central"/>
</dbReference>
<dbReference type="GO" id="GO:0032585">
    <property type="term" value="C:multivesicular body membrane"/>
    <property type="evidence" value="ECO:0007669"/>
    <property type="project" value="Ensembl"/>
</dbReference>
<dbReference type="GO" id="GO:0001750">
    <property type="term" value="C:photoreceptor outer segment"/>
    <property type="evidence" value="ECO:0007669"/>
    <property type="project" value="Ensembl"/>
</dbReference>
<dbReference type="GO" id="GO:0030141">
    <property type="term" value="C:secretory granule"/>
    <property type="evidence" value="ECO:0000318"/>
    <property type="project" value="GO_Central"/>
</dbReference>
<dbReference type="GO" id="GO:0003925">
    <property type="term" value="F:G protein activity"/>
    <property type="evidence" value="ECO:0007669"/>
    <property type="project" value="UniProtKB-EC"/>
</dbReference>
<dbReference type="GO" id="GO:0019003">
    <property type="term" value="F:GDP binding"/>
    <property type="evidence" value="ECO:0000250"/>
    <property type="project" value="UniProtKB"/>
</dbReference>
<dbReference type="GO" id="GO:0005525">
    <property type="term" value="F:GTP binding"/>
    <property type="evidence" value="ECO:0000250"/>
    <property type="project" value="UniProtKB"/>
</dbReference>
<dbReference type="GO" id="GO:0003924">
    <property type="term" value="F:GTPase activity"/>
    <property type="evidence" value="ECO:0000250"/>
    <property type="project" value="UniProtKB"/>
</dbReference>
<dbReference type="GO" id="GO:0031489">
    <property type="term" value="F:myosin V binding"/>
    <property type="evidence" value="ECO:0007669"/>
    <property type="project" value="Ensembl"/>
</dbReference>
<dbReference type="GO" id="GO:0019882">
    <property type="term" value="P:antigen processing and presentation"/>
    <property type="evidence" value="ECO:0007669"/>
    <property type="project" value="Ensembl"/>
</dbReference>
<dbReference type="GO" id="GO:0007596">
    <property type="term" value="P:blood coagulation"/>
    <property type="evidence" value="ECO:0007669"/>
    <property type="project" value="Ensembl"/>
</dbReference>
<dbReference type="GO" id="GO:0097278">
    <property type="term" value="P:complement-dependent cytotoxicity"/>
    <property type="evidence" value="ECO:0007669"/>
    <property type="project" value="Ensembl"/>
</dbReference>
<dbReference type="GO" id="GO:0043316">
    <property type="term" value="P:cytotoxic T cell degranulation"/>
    <property type="evidence" value="ECO:0007669"/>
    <property type="project" value="Ensembl"/>
</dbReference>
<dbReference type="GO" id="GO:0006887">
    <property type="term" value="P:exocytosis"/>
    <property type="evidence" value="ECO:0000318"/>
    <property type="project" value="GO_Central"/>
</dbReference>
<dbReference type="GO" id="GO:1990182">
    <property type="term" value="P:exosomal secretion"/>
    <property type="evidence" value="ECO:0007669"/>
    <property type="project" value="Ensembl"/>
</dbReference>
<dbReference type="GO" id="GO:0030318">
    <property type="term" value="P:melanocyte differentiation"/>
    <property type="evidence" value="ECO:0007669"/>
    <property type="project" value="Ensembl"/>
</dbReference>
<dbReference type="GO" id="GO:0032402">
    <property type="term" value="P:melanosome transport"/>
    <property type="evidence" value="ECO:0007669"/>
    <property type="project" value="Ensembl"/>
</dbReference>
<dbReference type="GO" id="GO:0036257">
    <property type="term" value="P:multivesicular body organization"/>
    <property type="evidence" value="ECO:0007669"/>
    <property type="project" value="Ensembl"/>
</dbReference>
<dbReference type="GO" id="GO:0071985">
    <property type="term" value="P:multivesicular body sorting pathway"/>
    <property type="evidence" value="ECO:0007669"/>
    <property type="project" value="Ensembl"/>
</dbReference>
<dbReference type="GO" id="GO:0043320">
    <property type="term" value="P:natural killer cell degranulation"/>
    <property type="evidence" value="ECO:0007669"/>
    <property type="project" value="Ensembl"/>
</dbReference>
<dbReference type="GO" id="GO:1903435">
    <property type="term" value="P:positive regulation of constitutive secretory pathway"/>
    <property type="evidence" value="ECO:0007669"/>
    <property type="project" value="Ensembl"/>
</dbReference>
<dbReference type="GO" id="GO:0045921">
    <property type="term" value="P:positive regulation of exocytosis"/>
    <property type="evidence" value="ECO:0000318"/>
    <property type="project" value="GO_Central"/>
</dbReference>
<dbReference type="GO" id="GO:0010628">
    <property type="term" value="P:positive regulation of gene expression"/>
    <property type="evidence" value="ECO:0007669"/>
    <property type="project" value="Ensembl"/>
</dbReference>
<dbReference type="GO" id="GO:0050766">
    <property type="term" value="P:positive regulation of phagocytosis"/>
    <property type="evidence" value="ECO:0007669"/>
    <property type="project" value="Ensembl"/>
</dbReference>
<dbReference type="GO" id="GO:1903428">
    <property type="term" value="P:positive regulation of reactive oxygen species biosynthetic process"/>
    <property type="evidence" value="ECO:0007669"/>
    <property type="project" value="Ensembl"/>
</dbReference>
<dbReference type="GO" id="GO:1903307">
    <property type="term" value="P:positive regulation of regulated secretory pathway"/>
    <property type="evidence" value="ECO:0007669"/>
    <property type="project" value="Ensembl"/>
</dbReference>
<dbReference type="GO" id="GO:0009306">
    <property type="term" value="P:protein secretion"/>
    <property type="evidence" value="ECO:0007669"/>
    <property type="project" value="Ensembl"/>
</dbReference>
<dbReference type="CDD" id="cd04127">
    <property type="entry name" value="Rab27A"/>
    <property type="match status" value="1"/>
</dbReference>
<dbReference type="FunFam" id="3.40.50.300:FF:000402">
    <property type="entry name" value="Ras-related protein Rab-27A"/>
    <property type="match status" value="1"/>
</dbReference>
<dbReference type="Gene3D" id="3.40.50.300">
    <property type="entry name" value="P-loop containing nucleotide triphosphate hydrolases"/>
    <property type="match status" value="1"/>
</dbReference>
<dbReference type="InterPro" id="IPR027417">
    <property type="entry name" value="P-loop_NTPase"/>
</dbReference>
<dbReference type="InterPro" id="IPR041837">
    <property type="entry name" value="Rab27a/b"/>
</dbReference>
<dbReference type="InterPro" id="IPR005225">
    <property type="entry name" value="Small_GTP-bd"/>
</dbReference>
<dbReference type="InterPro" id="IPR001806">
    <property type="entry name" value="Small_GTPase"/>
</dbReference>
<dbReference type="InterPro" id="IPR050305">
    <property type="entry name" value="Small_GTPase_Rab"/>
</dbReference>
<dbReference type="NCBIfam" id="TIGR00231">
    <property type="entry name" value="small_GTP"/>
    <property type="match status" value="1"/>
</dbReference>
<dbReference type="PANTHER" id="PTHR47980">
    <property type="entry name" value="LD44762P"/>
    <property type="match status" value="1"/>
</dbReference>
<dbReference type="Pfam" id="PF00071">
    <property type="entry name" value="Ras"/>
    <property type="match status" value="1"/>
</dbReference>
<dbReference type="PRINTS" id="PR00449">
    <property type="entry name" value="RASTRNSFRMNG"/>
</dbReference>
<dbReference type="SMART" id="SM00175">
    <property type="entry name" value="RAB"/>
    <property type="match status" value="1"/>
</dbReference>
<dbReference type="SMART" id="SM00176">
    <property type="entry name" value="RAN"/>
    <property type="match status" value="1"/>
</dbReference>
<dbReference type="SMART" id="SM00173">
    <property type="entry name" value="RAS"/>
    <property type="match status" value="1"/>
</dbReference>
<dbReference type="SMART" id="SM00174">
    <property type="entry name" value="RHO"/>
    <property type="match status" value="1"/>
</dbReference>
<dbReference type="SUPFAM" id="SSF52540">
    <property type="entry name" value="P-loop containing nucleoside triphosphate hydrolases"/>
    <property type="match status" value="1"/>
</dbReference>
<dbReference type="PROSITE" id="PS51419">
    <property type="entry name" value="RAB"/>
    <property type="match status" value="1"/>
</dbReference>
<accession>Q4LE85</accession>
<proteinExistence type="evidence at transcript level"/>
<sequence length="221" mass="24889">MSDGDYDYLIKFLALGDSGVGKTSVLYQYTDGKFNSKFITTVGIDFREKRVVYRANGPDGAIGRGQRIHLQLWDTAGQERFRSLTTAFFRDAMGFLLLFDLTNEQSFLNVRNWISQLQMHAYCENPDIVLCGNKSDLEDQRVVKEEEARGLAEKYGIPYFETSAANGTNVSLAIETLLDLIMKRMERCVDKSWIPEGVVRSNGHTSADPLNEEKEKGSCGC</sequence>
<keyword id="KW-0007">Acetylation</keyword>
<keyword id="KW-1015">Disulfide bond</keyword>
<keyword id="KW-0967">Endosome</keyword>
<keyword id="KW-0268">Exocytosis</keyword>
<keyword id="KW-0342">GTP-binding</keyword>
<keyword id="KW-0378">Hydrolase</keyword>
<keyword id="KW-0449">Lipoprotein</keyword>
<keyword id="KW-0458">Lysosome</keyword>
<keyword id="KW-0472">Membrane</keyword>
<keyword id="KW-0488">Methylation</keyword>
<keyword id="KW-0547">Nucleotide-binding</keyword>
<keyword id="KW-0597">Phosphoprotein</keyword>
<keyword id="KW-0636">Prenylation</keyword>
<keyword id="KW-1185">Reference proteome</keyword>